<reference key="1">
    <citation type="journal article" date="2002" name="Nature">
        <title>The genome sequence of Schizosaccharomyces pombe.</title>
        <authorList>
            <person name="Wood V."/>
            <person name="Gwilliam R."/>
            <person name="Rajandream M.A."/>
            <person name="Lyne M.H."/>
            <person name="Lyne R."/>
            <person name="Stewart A."/>
            <person name="Sgouros J.G."/>
            <person name="Peat N."/>
            <person name="Hayles J."/>
            <person name="Baker S.G."/>
            <person name="Basham D."/>
            <person name="Bowman S."/>
            <person name="Brooks K."/>
            <person name="Brown D."/>
            <person name="Brown S."/>
            <person name="Chillingworth T."/>
            <person name="Churcher C.M."/>
            <person name="Collins M."/>
            <person name="Connor R."/>
            <person name="Cronin A."/>
            <person name="Davis P."/>
            <person name="Feltwell T."/>
            <person name="Fraser A."/>
            <person name="Gentles S."/>
            <person name="Goble A."/>
            <person name="Hamlin N."/>
            <person name="Harris D.E."/>
            <person name="Hidalgo J."/>
            <person name="Hodgson G."/>
            <person name="Holroyd S."/>
            <person name="Hornsby T."/>
            <person name="Howarth S."/>
            <person name="Huckle E.J."/>
            <person name="Hunt S."/>
            <person name="Jagels K."/>
            <person name="James K.D."/>
            <person name="Jones L."/>
            <person name="Jones M."/>
            <person name="Leather S."/>
            <person name="McDonald S."/>
            <person name="McLean J."/>
            <person name="Mooney P."/>
            <person name="Moule S."/>
            <person name="Mungall K.L."/>
            <person name="Murphy L.D."/>
            <person name="Niblett D."/>
            <person name="Odell C."/>
            <person name="Oliver K."/>
            <person name="O'Neil S."/>
            <person name="Pearson D."/>
            <person name="Quail M.A."/>
            <person name="Rabbinowitsch E."/>
            <person name="Rutherford K.M."/>
            <person name="Rutter S."/>
            <person name="Saunders D."/>
            <person name="Seeger K."/>
            <person name="Sharp S."/>
            <person name="Skelton J."/>
            <person name="Simmonds M.N."/>
            <person name="Squares R."/>
            <person name="Squares S."/>
            <person name="Stevens K."/>
            <person name="Taylor K."/>
            <person name="Taylor R.G."/>
            <person name="Tivey A."/>
            <person name="Walsh S.V."/>
            <person name="Warren T."/>
            <person name="Whitehead S."/>
            <person name="Woodward J.R."/>
            <person name="Volckaert G."/>
            <person name="Aert R."/>
            <person name="Robben J."/>
            <person name="Grymonprez B."/>
            <person name="Weltjens I."/>
            <person name="Vanstreels E."/>
            <person name="Rieger M."/>
            <person name="Schaefer M."/>
            <person name="Mueller-Auer S."/>
            <person name="Gabel C."/>
            <person name="Fuchs M."/>
            <person name="Duesterhoeft A."/>
            <person name="Fritzc C."/>
            <person name="Holzer E."/>
            <person name="Moestl D."/>
            <person name="Hilbert H."/>
            <person name="Borzym K."/>
            <person name="Langer I."/>
            <person name="Beck A."/>
            <person name="Lehrach H."/>
            <person name="Reinhardt R."/>
            <person name="Pohl T.M."/>
            <person name="Eger P."/>
            <person name="Zimmermann W."/>
            <person name="Wedler H."/>
            <person name="Wambutt R."/>
            <person name="Purnelle B."/>
            <person name="Goffeau A."/>
            <person name="Cadieu E."/>
            <person name="Dreano S."/>
            <person name="Gloux S."/>
            <person name="Lelaure V."/>
            <person name="Mottier S."/>
            <person name="Galibert F."/>
            <person name="Aves S.J."/>
            <person name="Xiang Z."/>
            <person name="Hunt C."/>
            <person name="Moore K."/>
            <person name="Hurst S.M."/>
            <person name="Lucas M."/>
            <person name="Rochet M."/>
            <person name="Gaillardin C."/>
            <person name="Tallada V.A."/>
            <person name="Garzon A."/>
            <person name="Thode G."/>
            <person name="Daga R.R."/>
            <person name="Cruzado L."/>
            <person name="Jimenez J."/>
            <person name="Sanchez M."/>
            <person name="del Rey F."/>
            <person name="Benito J."/>
            <person name="Dominguez A."/>
            <person name="Revuelta J.L."/>
            <person name="Moreno S."/>
            <person name="Armstrong J."/>
            <person name="Forsburg S.L."/>
            <person name="Cerutti L."/>
            <person name="Lowe T."/>
            <person name="McCombie W.R."/>
            <person name="Paulsen I."/>
            <person name="Potashkin J."/>
            <person name="Shpakovski G.V."/>
            <person name="Ussery D."/>
            <person name="Barrell B.G."/>
            <person name="Nurse P."/>
        </authorList>
    </citation>
    <scope>NUCLEOTIDE SEQUENCE [LARGE SCALE GENOMIC DNA]</scope>
    <source>
        <strain>972 / ATCC 24843</strain>
    </source>
</reference>
<reference key="2">
    <citation type="journal article" date="2002" name="Eur. J. Biochem.">
        <title>Biosynthesis of riboflavin: 6,7-dimethyl-8-ribityllumazine synthase of Schizosaccharomyces pombe.</title>
        <authorList>
            <person name="Fischer M."/>
            <person name="Haase I."/>
            <person name="Feicht R."/>
            <person name="Richter G."/>
            <person name="Gerhardt S."/>
            <person name="Changeux J.P."/>
            <person name="Huber R."/>
            <person name="Bacher A."/>
        </authorList>
    </citation>
    <scope>PROTEIN SEQUENCE OF 1-15</scope>
    <scope>FUNCTION</scope>
    <scope>CATALYTIC ACTIVITY</scope>
    <scope>KINETIC PARAMETERS</scope>
    <scope>ACTIVITY REGULATION</scope>
    <scope>SUBUNIT</scope>
    <scope>MASS SPECTROMETRY</scope>
    <scope>PATHWAY</scope>
    <scope>CRYSTALLIZATION</scope>
    <scope>MUTAGENESIS OF TRP-27</scope>
    <source>
        <strain>ATCC 16491</strain>
    </source>
</reference>
<reference key="3">
    <citation type="journal article" date="2002" name="J. Mol. Biol.">
        <title>The structural basis of riboflavin binding to Schizosaccharomyces pombe 6,7-dimethyl-8-ribityllumazine synthase.</title>
        <authorList>
            <person name="Gerhardt S."/>
            <person name="Haase I."/>
            <person name="Steinbacher S."/>
            <person name="Kaiser J.T."/>
            <person name="Cushman M."/>
            <person name="Bacher A."/>
            <person name="Huber R."/>
            <person name="Fischer M."/>
        </authorList>
    </citation>
    <scope>X-RAY CRYSTALLOGRAPHY (2.00 ANGSTROMS) OF WILD-TYPE AND MUTANTS GLY-27; TYR-63 AND PHE-119 IN COMPLEXES WITH SUBSTRATE AND PRODUCT ANALOG INHIBITORS; RIBOFLAVIN AND PHOSPHATE</scope>
    <scope>SUBUNIT</scope>
    <source>
        <strain>ATCC 16491</strain>
    </source>
</reference>
<reference key="4">
    <citation type="journal article" date="2004" name="Eur. J. Biochem.">
        <title>Structural basis of charge transfer complex formation by riboflavin bound to 6,7-dimethyl-8-ribityllumazine synthase.</title>
        <authorList>
            <person name="Koch M."/>
            <person name="Breithaupt C."/>
            <person name="Gerhardt S."/>
            <person name="Haase I."/>
            <person name="Weber S."/>
            <person name="Cushman M."/>
            <person name="Huber R."/>
            <person name="Bacher A."/>
            <person name="Fischer M."/>
        </authorList>
    </citation>
    <scope>X-RAY CRYSTALLOGRAPHY (2.70 ANGSTROMS) OF MUTANT TYR-27 IN COMPLEXES WITH SUBSTRATE AND PRODUCT ANALOG INHIBITORS; RIBOFLAVIN AND PHOSPHATE</scope>
    <scope>SUBUNIT</scope>
    <source>
        <strain>ATCC 16491</strain>
    </source>
</reference>
<keyword id="KW-0002">3D-structure</keyword>
<keyword id="KW-0903">Direct protein sequencing</keyword>
<keyword id="KW-1185">Reference proteome</keyword>
<keyword id="KW-0686">Riboflavin biosynthesis</keyword>
<keyword id="KW-0808">Transferase</keyword>
<accession>Q9UUB1</accession>
<protein>
    <recommendedName>
        <fullName>6,7-dimethyl-8-ribityllumazine synthase</fullName>
        <shortName>DMRL synthase</shortName>
        <shortName>LS</shortName>
        <shortName>Lumazine synthase</shortName>
        <ecNumber>2.5.1.78</ecNumber>
    </recommendedName>
    <alternativeName>
        <fullName>Riboflavin synthase beta chain</fullName>
    </alternativeName>
</protein>
<proteinExistence type="evidence at protein level"/>
<sequence length="159" mass="17188">MFSGIKGPNPSDLKGPELRILIVHARWNLQAIEPLVKGAVETMIEKHDVKLENIDIESVPGSWELPQGIRASIARNTYDAVIGIGVLIKGSTMHFEYISEAVVHGLMRVGLDSGVPVILGLLTVLNEEQALYRAGLNGGHNHGNDWGSAAVEMGLKALY</sequence>
<comment type="function">
    <text evidence="2">Catalyzes the formation of 6,7-dimethyl-8-ribityllumazine by condensation of 5-amino-6-(D-ribitylamino)uracil with 3,4-dihydroxy-2-butanone 4-phosphate. This is the penultimate step in the biosynthesis of riboflavin. Also binds riboflavin with an unexpected high affinity.</text>
</comment>
<comment type="catalytic activity">
    <reaction evidence="2">
        <text>(2S)-2-hydroxy-3-oxobutyl phosphate + 5-amino-6-(D-ribitylamino)uracil = 6,7-dimethyl-8-(1-D-ribityl)lumazine + phosphate + 2 H2O + H(+)</text>
        <dbReference type="Rhea" id="RHEA:26152"/>
        <dbReference type="ChEBI" id="CHEBI:15377"/>
        <dbReference type="ChEBI" id="CHEBI:15378"/>
        <dbReference type="ChEBI" id="CHEBI:15934"/>
        <dbReference type="ChEBI" id="CHEBI:43474"/>
        <dbReference type="ChEBI" id="CHEBI:58201"/>
        <dbReference type="ChEBI" id="CHEBI:58830"/>
        <dbReference type="EC" id="2.5.1.78"/>
    </reaction>
</comment>
<comment type="activity regulation">
    <text evidence="2">Competitively inhibited by riboflavin (Ki of 17 uM).</text>
</comment>
<comment type="biophysicochemical properties">
    <kinetics>
        <KM evidence="2">5 uM for 5-amino-6-(D-ribitylamino)uracil (at 37 degrees Celsius and pH 7.0)</KM>
        <KM evidence="2">67 uM for 3,4-dihydroxy-2-butanone 4-phosphate (at 37 degrees Celsius and pH 7.0)</KM>
        <Vmax evidence="2">13000.0 nmol/h/mg enzyme (at 37 degrees Celsius and pH 7.0)</Vmax>
    </kinetics>
</comment>
<comment type="pathway">
    <text evidence="2">Cofactor biosynthesis; riboflavin biosynthesis; riboflavin from 2-hydroxy-3-oxobutyl phosphate and 5-amino-6-(D-ribitylamino)uracil: step 1/2.</text>
</comment>
<comment type="subunit">
    <text evidence="2 3 4">Homopentamer.</text>
</comment>
<comment type="mass spectrometry" mass="17189.0" method="Electrospray" evidence="2"/>
<comment type="similarity">
    <text evidence="5">Belongs to the DMRL synthase family.</text>
</comment>
<feature type="chain" id="PRO_0000134856" description="6,7-dimethyl-8-ribityllumazine synthase">
    <location>
        <begin position="1"/>
        <end position="159"/>
    </location>
</feature>
<feature type="active site" description="Proton donor" evidence="1">
    <location>
        <position position="94"/>
    </location>
</feature>
<feature type="binding site">
    <location>
        <position position="27"/>
    </location>
    <ligand>
        <name>5-amino-6-(D-ribitylamino)uracil</name>
        <dbReference type="ChEBI" id="CHEBI:15934"/>
    </ligand>
</feature>
<feature type="binding site">
    <location>
        <begin position="62"/>
        <end position="64"/>
    </location>
    <ligand>
        <name>5-amino-6-(D-ribitylamino)uracil</name>
        <dbReference type="ChEBI" id="CHEBI:15934"/>
    </ligand>
</feature>
<feature type="binding site">
    <location>
        <begin position="86"/>
        <end position="88"/>
    </location>
    <ligand>
        <name>5-amino-6-(D-ribitylamino)uracil</name>
        <dbReference type="ChEBI" id="CHEBI:15934"/>
    </ligand>
</feature>
<feature type="binding site" evidence="5">
    <location>
        <begin position="91"/>
        <end position="92"/>
    </location>
    <ligand>
        <name>(2S)-2-hydroxy-3-oxobutyl phosphate</name>
        <dbReference type="ChEBI" id="CHEBI:58830"/>
    </ligand>
</feature>
<feature type="binding site">
    <location>
        <position position="119"/>
    </location>
    <ligand>
        <name>5-amino-6-(D-ribitylamino)uracil</name>
        <dbReference type="ChEBI" id="CHEBI:15934"/>
    </ligand>
</feature>
<feature type="binding site" evidence="5">
    <location>
        <position position="133"/>
    </location>
    <ligand>
        <name>(2S)-2-hydroxy-3-oxobutyl phosphate</name>
        <dbReference type="ChEBI" id="CHEBI:58830"/>
    </ligand>
</feature>
<feature type="mutagenesis site" description="Minor effects on the kinetic properties." evidence="2">
    <original>W</original>
    <variation>F</variation>
    <variation>Y</variation>
    <location>
        <position position="27"/>
    </location>
</feature>
<feature type="mutagenesis site" description="Reduced affinity for riboflavin and for the substrate 5-amino-6-(D-ribitylamino)uracil." evidence="2">
    <original>W</original>
    <variation>G</variation>
    <variation>H</variation>
    <variation>I</variation>
    <variation>S</variation>
    <location>
        <position position="27"/>
    </location>
</feature>
<feature type="strand" evidence="6">
    <location>
        <begin position="20"/>
        <end position="24"/>
    </location>
</feature>
<feature type="helix" evidence="6">
    <location>
        <begin position="29"/>
        <end position="47"/>
    </location>
</feature>
<feature type="helix" evidence="6">
    <location>
        <begin position="51"/>
        <end position="53"/>
    </location>
</feature>
<feature type="strand" evidence="6">
    <location>
        <begin position="54"/>
        <end position="58"/>
    </location>
</feature>
<feature type="helix" evidence="6">
    <location>
        <begin position="62"/>
        <end position="64"/>
    </location>
</feature>
<feature type="helix" evidence="6">
    <location>
        <begin position="65"/>
        <end position="75"/>
    </location>
</feature>
<feature type="strand" evidence="6">
    <location>
        <begin position="79"/>
        <end position="88"/>
    </location>
</feature>
<feature type="strand" evidence="6">
    <location>
        <begin position="91"/>
        <end position="93"/>
    </location>
</feature>
<feature type="helix" evidence="6">
    <location>
        <begin position="94"/>
        <end position="113"/>
    </location>
</feature>
<feature type="strand" evidence="6">
    <location>
        <begin position="117"/>
        <end position="126"/>
    </location>
</feature>
<feature type="helix" evidence="6">
    <location>
        <begin position="127"/>
        <end position="133"/>
    </location>
</feature>
<feature type="helix" evidence="6">
    <location>
        <begin position="142"/>
        <end position="156"/>
    </location>
</feature>
<name>RIB4_SCHPO</name>
<organism>
    <name type="scientific">Schizosaccharomyces pombe (strain 972 / ATCC 24843)</name>
    <name type="common">Fission yeast</name>
    <dbReference type="NCBI Taxonomy" id="284812"/>
    <lineage>
        <taxon>Eukaryota</taxon>
        <taxon>Fungi</taxon>
        <taxon>Dikarya</taxon>
        <taxon>Ascomycota</taxon>
        <taxon>Taphrinomycotina</taxon>
        <taxon>Schizosaccharomycetes</taxon>
        <taxon>Schizosaccharomycetales</taxon>
        <taxon>Schizosaccharomycetaceae</taxon>
        <taxon>Schizosaccharomyces</taxon>
    </lineage>
</organism>
<evidence type="ECO:0000255" key="1"/>
<evidence type="ECO:0000269" key="2">
    <source>
    </source>
</evidence>
<evidence type="ECO:0000269" key="3">
    <source>
    </source>
</evidence>
<evidence type="ECO:0000269" key="4">
    <source>
    </source>
</evidence>
<evidence type="ECO:0000305" key="5"/>
<evidence type="ECO:0007829" key="6">
    <source>
        <dbReference type="PDB" id="1KZ1"/>
    </source>
</evidence>
<gene>
    <name type="primary">rib4</name>
    <name type="ORF">SPBC409.13</name>
</gene>
<dbReference type="EC" id="2.5.1.78"/>
<dbReference type="EMBL" id="CU329671">
    <property type="protein sequence ID" value="CAB52615.1"/>
    <property type="molecule type" value="Genomic_DNA"/>
</dbReference>
<dbReference type="PIR" id="T40440">
    <property type="entry name" value="T40440"/>
</dbReference>
<dbReference type="RefSeq" id="NP_595463.1">
    <property type="nucleotide sequence ID" value="NM_001021373.2"/>
</dbReference>
<dbReference type="PDB" id="1KYV">
    <property type="method" value="X-ray"/>
    <property type="resolution" value="2.40 A"/>
    <property type="chains" value="A/B/C/D/E=1-159"/>
</dbReference>
<dbReference type="PDB" id="1KYX">
    <property type="method" value="X-ray"/>
    <property type="resolution" value="2.60 A"/>
    <property type="chains" value="A/B/C/D/E=1-159"/>
</dbReference>
<dbReference type="PDB" id="1KYY">
    <property type="method" value="X-ray"/>
    <property type="resolution" value="2.40 A"/>
    <property type="chains" value="A/B/C/D/E=1-159"/>
</dbReference>
<dbReference type="PDB" id="1KZ1">
    <property type="method" value="X-ray"/>
    <property type="resolution" value="2.00 A"/>
    <property type="chains" value="A/B/C/D/E=1-159"/>
</dbReference>
<dbReference type="PDB" id="1KZ4">
    <property type="method" value="X-ray"/>
    <property type="resolution" value="3.10 A"/>
    <property type="chains" value="A/B/C/D/E=1-159"/>
</dbReference>
<dbReference type="PDB" id="1KZ6">
    <property type="method" value="X-ray"/>
    <property type="resolution" value="2.70 A"/>
    <property type="chains" value="A/B/C/D/E=1-159"/>
</dbReference>
<dbReference type="PDB" id="1KZ9">
    <property type="method" value="X-ray"/>
    <property type="resolution" value="3.10 A"/>
    <property type="chains" value="A/B/C/D/E=1-159"/>
</dbReference>
<dbReference type="PDB" id="2A57">
    <property type="method" value="X-ray"/>
    <property type="resolution" value="2.75 A"/>
    <property type="chains" value="A/B/C/D/E=1-159"/>
</dbReference>
<dbReference type="PDB" id="2A58">
    <property type="method" value="X-ray"/>
    <property type="resolution" value="2.80 A"/>
    <property type="chains" value="A/B/C/D/E=1-159"/>
</dbReference>
<dbReference type="PDB" id="2A59">
    <property type="method" value="X-ray"/>
    <property type="resolution" value="2.70 A"/>
    <property type="chains" value="A/B/C/D/E=1-159"/>
</dbReference>
<dbReference type="PDBsum" id="1KYV"/>
<dbReference type="PDBsum" id="1KYX"/>
<dbReference type="PDBsum" id="1KYY"/>
<dbReference type="PDBsum" id="1KZ1"/>
<dbReference type="PDBsum" id="1KZ4"/>
<dbReference type="PDBsum" id="1KZ6"/>
<dbReference type="PDBsum" id="1KZ9"/>
<dbReference type="PDBsum" id="2A57"/>
<dbReference type="PDBsum" id="2A58"/>
<dbReference type="PDBsum" id="2A59"/>
<dbReference type="SMR" id="Q9UUB1"/>
<dbReference type="BioGRID" id="277640">
    <property type="interactions" value="4"/>
</dbReference>
<dbReference type="FunCoup" id="Q9UUB1">
    <property type="interactions" value="136"/>
</dbReference>
<dbReference type="STRING" id="284812.Q9UUB1"/>
<dbReference type="iPTMnet" id="Q9UUB1"/>
<dbReference type="PaxDb" id="4896-SPBC409.13.1"/>
<dbReference type="EnsemblFungi" id="SPBC409.13.1">
    <property type="protein sequence ID" value="SPBC409.13.1:pep"/>
    <property type="gene ID" value="SPBC409.13"/>
</dbReference>
<dbReference type="GeneID" id="2541125"/>
<dbReference type="KEGG" id="spo:2541125"/>
<dbReference type="PomBase" id="SPBC409.13">
    <property type="gene designation" value="rib4"/>
</dbReference>
<dbReference type="VEuPathDB" id="FungiDB:SPBC409.13"/>
<dbReference type="eggNOG" id="KOG3243">
    <property type="taxonomic scope" value="Eukaryota"/>
</dbReference>
<dbReference type="HOGENOM" id="CLU_089358_2_0_1"/>
<dbReference type="InParanoid" id="Q9UUB1"/>
<dbReference type="OMA" id="CQGVTQG"/>
<dbReference type="PhylomeDB" id="Q9UUB1"/>
<dbReference type="BRENDA" id="2.5.1.78">
    <property type="organism ID" value="5613"/>
</dbReference>
<dbReference type="SABIO-RK" id="Q9UUB1"/>
<dbReference type="UniPathway" id="UPA00275">
    <property type="reaction ID" value="UER00404"/>
</dbReference>
<dbReference type="EvolutionaryTrace" id="Q9UUB1"/>
<dbReference type="PRO" id="PR:Q9UUB1"/>
<dbReference type="Proteomes" id="UP000002485">
    <property type="component" value="Chromosome II"/>
</dbReference>
<dbReference type="GO" id="GO:0005737">
    <property type="term" value="C:cytoplasm"/>
    <property type="evidence" value="ECO:0007005"/>
    <property type="project" value="PomBase"/>
</dbReference>
<dbReference type="GO" id="GO:0005758">
    <property type="term" value="C:mitochondrial intermembrane space"/>
    <property type="evidence" value="ECO:0000318"/>
    <property type="project" value="GO_Central"/>
</dbReference>
<dbReference type="GO" id="GO:0005634">
    <property type="term" value="C:nucleus"/>
    <property type="evidence" value="ECO:0007005"/>
    <property type="project" value="PomBase"/>
</dbReference>
<dbReference type="GO" id="GO:0009349">
    <property type="term" value="C:riboflavin synthase complex"/>
    <property type="evidence" value="ECO:0007669"/>
    <property type="project" value="InterPro"/>
</dbReference>
<dbReference type="GO" id="GO:0000906">
    <property type="term" value="F:6,7-dimethyl-8-ribityllumazine synthase activity"/>
    <property type="evidence" value="ECO:0000314"/>
    <property type="project" value="PomBase"/>
</dbReference>
<dbReference type="GO" id="GO:1902444">
    <property type="term" value="F:riboflavin binding"/>
    <property type="evidence" value="ECO:0000314"/>
    <property type="project" value="PomBase"/>
</dbReference>
<dbReference type="GO" id="GO:0004746">
    <property type="term" value="F:riboflavin synthase activity"/>
    <property type="evidence" value="ECO:0000314"/>
    <property type="project" value="PomBase"/>
</dbReference>
<dbReference type="GO" id="GO:0009231">
    <property type="term" value="P:riboflavin biosynthetic process"/>
    <property type="evidence" value="ECO:0000314"/>
    <property type="project" value="PomBase"/>
</dbReference>
<dbReference type="CDD" id="cd09209">
    <property type="entry name" value="Lumazine_synthase-I"/>
    <property type="match status" value="1"/>
</dbReference>
<dbReference type="FunFam" id="3.40.50.960:FF:000007">
    <property type="entry name" value="6,7-dimethyl-8-ribityllumazine synthase"/>
    <property type="match status" value="1"/>
</dbReference>
<dbReference type="Gene3D" id="3.40.50.960">
    <property type="entry name" value="Lumazine/riboflavin synthase"/>
    <property type="match status" value="1"/>
</dbReference>
<dbReference type="HAMAP" id="MF_00178">
    <property type="entry name" value="Lumazine_synth"/>
    <property type="match status" value="1"/>
</dbReference>
<dbReference type="InterPro" id="IPR034964">
    <property type="entry name" value="LS"/>
</dbReference>
<dbReference type="InterPro" id="IPR002180">
    <property type="entry name" value="LS/RS"/>
</dbReference>
<dbReference type="InterPro" id="IPR036467">
    <property type="entry name" value="LS/RS_sf"/>
</dbReference>
<dbReference type="NCBIfam" id="TIGR00114">
    <property type="entry name" value="lumazine-synth"/>
    <property type="match status" value="1"/>
</dbReference>
<dbReference type="PANTHER" id="PTHR21058:SF0">
    <property type="entry name" value="6,7-DIMETHYL-8-RIBITYLLUMAZINE SYNTHASE"/>
    <property type="match status" value="1"/>
</dbReference>
<dbReference type="PANTHER" id="PTHR21058">
    <property type="entry name" value="6,7-DIMETHYL-8-RIBITYLLUMAZINE SYNTHASE DMRL SYNTHASE LUMAZINE SYNTHASE"/>
    <property type="match status" value="1"/>
</dbReference>
<dbReference type="Pfam" id="PF00885">
    <property type="entry name" value="DMRL_synthase"/>
    <property type="match status" value="1"/>
</dbReference>
<dbReference type="SUPFAM" id="SSF52121">
    <property type="entry name" value="Lumazine synthase"/>
    <property type="match status" value="1"/>
</dbReference>